<keyword id="KW-0067">ATP-binding</keyword>
<keyword id="KW-1003">Cell membrane</keyword>
<keyword id="KW-0472">Membrane</keyword>
<keyword id="KW-0547">Nucleotide-binding</keyword>
<keyword id="KW-1185">Reference proteome</keyword>
<keyword id="KW-0677">Repeat</keyword>
<keyword id="KW-1278">Translocase</keyword>
<keyword id="KW-0813">Transport</keyword>
<reference key="1">
    <citation type="journal article" date="2003" name="Nature">
        <title>The genome sequence of Bacillus anthracis Ames and comparison to closely related bacteria.</title>
        <authorList>
            <person name="Read T.D."/>
            <person name="Peterson S.N."/>
            <person name="Tourasse N.J."/>
            <person name="Baillie L.W."/>
            <person name="Paulsen I.T."/>
            <person name="Nelson K.E."/>
            <person name="Tettelin H."/>
            <person name="Fouts D.E."/>
            <person name="Eisen J.A."/>
            <person name="Gill S.R."/>
            <person name="Holtzapple E.K."/>
            <person name="Okstad O.A."/>
            <person name="Helgason E."/>
            <person name="Rilstone J."/>
            <person name="Wu M."/>
            <person name="Kolonay J.F."/>
            <person name="Beanan M.J."/>
            <person name="Dodson R.J."/>
            <person name="Brinkac L.M."/>
            <person name="Gwinn M.L."/>
            <person name="DeBoy R.T."/>
            <person name="Madpu R."/>
            <person name="Daugherty S.C."/>
            <person name="Durkin A.S."/>
            <person name="Haft D.H."/>
            <person name="Nelson W.C."/>
            <person name="Peterson J.D."/>
            <person name="Pop M."/>
            <person name="Khouri H.M."/>
            <person name="Radune D."/>
            <person name="Benton J.L."/>
            <person name="Mahamoud Y."/>
            <person name="Jiang L."/>
            <person name="Hance I.R."/>
            <person name="Weidman J.F."/>
            <person name="Berry K.J."/>
            <person name="Plaut R.D."/>
            <person name="Wolf A.M."/>
            <person name="Watkins K.L."/>
            <person name="Nierman W.C."/>
            <person name="Hazen A."/>
            <person name="Cline R.T."/>
            <person name="Redmond C."/>
            <person name="Thwaite J.E."/>
            <person name="White O."/>
            <person name="Salzberg S.L."/>
            <person name="Thomason B."/>
            <person name="Friedlander A.M."/>
            <person name="Koehler T.M."/>
            <person name="Hanna P.C."/>
            <person name="Kolstoe A.-B."/>
            <person name="Fraser C.M."/>
        </authorList>
    </citation>
    <scope>NUCLEOTIDE SEQUENCE [LARGE SCALE GENOMIC DNA]</scope>
    <source>
        <strain>Ames / isolate Porton</strain>
    </source>
</reference>
<reference key="2">
    <citation type="journal article" date="2009" name="J. Bacteriol.">
        <title>The complete genome sequence of Bacillus anthracis Ames 'Ancestor'.</title>
        <authorList>
            <person name="Ravel J."/>
            <person name="Jiang L."/>
            <person name="Stanley S.T."/>
            <person name="Wilson M.R."/>
            <person name="Decker R.S."/>
            <person name="Read T.D."/>
            <person name="Worsham P."/>
            <person name="Keim P.S."/>
            <person name="Salzberg S.L."/>
            <person name="Fraser-Liggett C.M."/>
            <person name="Rasko D.A."/>
        </authorList>
    </citation>
    <scope>NUCLEOTIDE SEQUENCE [LARGE SCALE GENOMIC DNA]</scope>
    <source>
        <strain>Ames ancestor</strain>
    </source>
</reference>
<reference key="3">
    <citation type="submission" date="2004-01" db="EMBL/GenBank/DDBJ databases">
        <title>Complete genome sequence of Bacillus anthracis Sterne.</title>
        <authorList>
            <person name="Brettin T.S."/>
            <person name="Bruce D."/>
            <person name="Challacombe J.F."/>
            <person name="Gilna P."/>
            <person name="Han C."/>
            <person name="Hill K."/>
            <person name="Hitchcock P."/>
            <person name="Jackson P."/>
            <person name="Keim P."/>
            <person name="Longmire J."/>
            <person name="Lucas S."/>
            <person name="Okinaka R."/>
            <person name="Richardson P."/>
            <person name="Rubin E."/>
            <person name="Tice H."/>
        </authorList>
    </citation>
    <scope>NUCLEOTIDE SEQUENCE [LARGE SCALE GENOMIC DNA]</scope>
    <source>
        <strain>Sterne</strain>
    </source>
</reference>
<comment type="function">
    <text evidence="1">Probably part of an ABC transporter complex. Responsible for energy coupling to the transport system (By similarity).</text>
</comment>
<comment type="subcellular location">
    <subcellularLocation>
        <location evidence="1">Cell membrane</location>
        <topology evidence="1">Peripheral membrane protein</topology>
    </subcellularLocation>
</comment>
<comment type="similarity">
    <text evidence="3">Belongs to the ABC transporter superfamily.</text>
</comment>
<name>Y2641_BACAN</name>
<protein>
    <recommendedName>
        <fullName>Putative ABC transporter ATP-binding protein BA_2641/GBAA_2641/BAS2461</fullName>
        <ecNumber>7.-.-.-</ecNumber>
    </recommendedName>
</protein>
<sequence length="566" mass="63840">MQPIISFEQFNFQYKHAAQPTVKDITFHIYPGEKVLIAGRSGSGKSTLAHCMNGLIPFSYEGISTGNILIAGKDPRKKSVFELSKHVGTILQDQDAQFIGLTVEEDVAFYLENECVNQDEMKKIVSESLKKVGMHTFHKQSPHELSGGQKQTVSLAGLLTTNAPMLLFDEPLANLDPASSLHTIELIKNIHKQYNKTIVIIEHRIEEMLNLDLDKIILIDEGEIVAIDTPERILASNILPSIGLREPMYIEGLKRLHFDSNNDVIYPLENLHKESISGVIKEWMEKKAFCKDTPTKKELLKVENLSFSYPNKQKALENVNLSIYEGEIVALLGHNGAGKSTLAHSLIGINKTKNSRILIDGVNINSWSIRKRGEIISYVMQNPNHMITQSTVIEEVSFTLKLKKVSKEEIKFRAEEALKICGLYPFRNWPIQALSYGQKKRLTIASVLTANPKLIILDEPTAGQDYYHYKQFMSFIRKLAKKGISFIFITHDMNLALEYADRAIVLHEGRIIANHTASIVLGHPATLQRANLKESSLFKLVKFSGIANPGKFMELYFDDIRREEGV</sequence>
<gene>
    <name type="ordered locus">BA_2641</name>
    <name type="ordered locus">GBAA_2641</name>
    <name type="ordered locus">BAS2461</name>
</gene>
<evidence type="ECO:0000250" key="1"/>
<evidence type="ECO:0000255" key="2">
    <source>
        <dbReference type="PROSITE-ProRule" id="PRU00434"/>
    </source>
</evidence>
<evidence type="ECO:0000305" key="3"/>
<feature type="chain" id="PRO_0000091971" description="Putative ABC transporter ATP-binding protein BA_2641/GBAA_2641/BAS2461">
    <location>
        <begin position="1"/>
        <end position="566"/>
    </location>
</feature>
<feature type="domain" description="ABC transporter 1" evidence="2">
    <location>
        <begin position="5"/>
        <end position="246"/>
    </location>
</feature>
<feature type="domain" description="ABC transporter 2" evidence="2">
    <location>
        <begin position="300"/>
        <end position="533"/>
    </location>
</feature>
<feature type="binding site" evidence="2">
    <location>
        <begin position="39"/>
        <end position="46"/>
    </location>
    <ligand>
        <name>ATP</name>
        <dbReference type="ChEBI" id="CHEBI:30616"/>
        <label>1</label>
    </ligand>
</feature>
<feature type="binding site" evidence="2">
    <location>
        <begin position="333"/>
        <end position="340"/>
    </location>
    <ligand>
        <name>ATP</name>
        <dbReference type="ChEBI" id="CHEBI:30616"/>
        <label>2</label>
    </ligand>
</feature>
<feature type="sequence conflict" description="In Ref. 3; AAT54772." evidence="3" ref="3">
    <original>G</original>
    <variation>V</variation>
    <location>
        <position position="39"/>
    </location>
</feature>
<dbReference type="EC" id="7.-.-.-"/>
<dbReference type="EMBL" id="AE016879">
    <property type="protein sequence ID" value="AAP26489.1"/>
    <property type="molecule type" value="Genomic_DNA"/>
</dbReference>
<dbReference type="EMBL" id="AE017334">
    <property type="protein sequence ID" value="AAT31757.1"/>
    <property type="molecule type" value="Genomic_DNA"/>
</dbReference>
<dbReference type="EMBL" id="AE017225">
    <property type="protein sequence ID" value="AAT54772.1"/>
    <property type="molecule type" value="Genomic_DNA"/>
</dbReference>
<dbReference type="RefSeq" id="NP_845003.1">
    <property type="nucleotide sequence ID" value="NC_003997.3"/>
</dbReference>
<dbReference type="RefSeq" id="WP_001182467.1">
    <property type="nucleotide sequence ID" value="NZ_WXXH01000192.1"/>
</dbReference>
<dbReference type="RefSeq" id="WP_001182484.1">
    <property type="nucleotide sequence ID" value="NZ_VLYL01000002.1"/>
</dbReference>
<dbReference type="SMR" id="Q81PZ8"/>
<dbReference type="STRING" id="261594.GBAA_2641"/>
<dbReference type="DNASU" id="1087320"/>
<dbReference type="GeneID" id="45022493"/>
<dbReference type="KEGG" id="ban:BA_2641"/>
<dbReference type="KEGG" id="bar:GBAA_2641"/>
<dbReference type="KEGG" id="bat:BAS2461"/>
<dbReference type="PATRIC" id="fig|1392.234.peg.2090"/>
<dbReference type="eggNOG" id="COG1122">
    <property type="taxonomic scope" value="Bacteria"/>
</dbReference>
<dbReference type="HOGENOM" id="CLU_000604_86_7_9"/>
<dbReference type="OMA" id="KHEYSKL"/>
<dbReference type="OrthoDB" id="501320at2"/>
<dbReference type="Proteomes" id="UP000000427">
    <property type="component" value="Chromosome"/>
</dbReference>
<dbReference type="Proteomes" id="UP000000594">
    <property type="component" value="Chromosome"/>
</dbReference>
<dbReference type="GO" id="GO:0043190">
    <property type="term" value="C:ATP-binding cassette (ABC) transporter complex"/>
    <property type="evidence" value="ECO:0007669"/>
    <property type="project" value="TreeGrafter"/>
</dbReference>
<dbReference type="GO" id="GO:0005524">
    <property type="term" value="F:ATP binding"/>
    <property type="evidence" value="ECO:0007669"/>
    <property type="project" value="UniProtKB-KW"/>
</dbReference>
<dbReference type="GO" id="GO:0016887">
    <property type="term" value="F:ATP hydrolysis activity"/>
    <property type="evidence" value="ECO:0007669"/>
    <property type="project" value="InterPro"/>
</dbReference>
<dbReference type="GO" id="GO:0042626">
    <property type="term" value="F:ATPase-coupled transmembrane transporter activity"/>
    <property type="evidence" value="ECO:0007669"/>
    <property type="project" value="TreeGrafter"/>
</dbReference>
<dbReference type="CDD" id="cd03225">
    <property type="entry name" value="ABC_cobalt_CbiO_domain1"/>
    <property type="match status" value="2"/>
</dbReference>
<dbReference type="FunFam" id="3.40.50.300:FF:001422">
    <property type="entry name" value="Cobalt ABC transporter ATP-binding protein"/>
    <property type="match status" value="1"/>
</dbReference>
<dbReference type="FunFam" id="3.40.50.300:FF:000224">
    <property type="entry name" value="Energy-coupling factor transporter ATP-binding protein EcfA"/>
    <property type="match status" value="1"/>
</dbReference>
<dbReference type="Gene3D" id="3.40.50.300">
    <property type="entry name" value="P-loop containing nucleotide triphosphate hydrolases"/>
    <property type="match status" value="2"/>
</dbReference>
<dbReference type="InterPro" id="IPR003593">
    <property type="entry name" value="AAA+_ATPase"/>
</dbReference>
<dbReference type="InterPro" id="IPR022216">
    <property type="entry name" value="ABC_Co_transporter"/>
</dbReference>
<dbReference type="InterPro" id="IPR003439">
    <property type="entry name" value="ABC_transporter-like_ATP-bd"/>
</dbReference>
<dbReference type="InterPro" id="IPR017871">
    <property type="entry name" value="ABC_transporter-like_CS"/>
</dbReference>
<dbReference type="InterPro" id="IPR015856">
    <property type="entry name" value="ABC_transpr_CbiO/EcfA_su"/>
</dbReference>
<dbReference type="InterPro" id="IPR050095">
    <property type="entry name" value="ECF_ABC_transporter_ATP-bd"/>
</dbReference>
<dbReference type="InterPro" id="IPR027417">
    <property type="entry name" value="P-loop_NTPase"/>
</dbReference>
<dbReference type="NCBIfam" id="NF010167">
    <property type="entry name" value="PRK13648.1"/>
    <property type="match status" value="2"/>
</dbReference>
<dbReference type="PANTHER" id="PTHR43553:SF26">
    <property type="entry name" value="ABC TRANSPORTER ATP-BINDING PROTEIN BC_2655-RELATED"/>
    <property type="match status" value="1"/>
</dbReference>
<dbReference type="PANTHER" id="PTHR43553">
    <property type="entry name" value="HEAVY METAL TRANSPORTER"/>
    <property type="match status" value="1"/>
</dbReference>
<dbReference type="Pfam" id="PF00005">
    <property type="entry name" value="ABC_tran"/>
    <property type="match status" value="2"/>
</dbReference>
<dbReference type="Pfam" id="PF12558">
    <property type="entry name" value="DUF3744"/>
    <property type="match status" value="1"/>
</dbReference>
<dbReference type="SMART" id="SM00382">
    <property type="entry name" value="AAA"/>
    <property type="match status" value="2"/>
</dbReference>
<dbReference type="SUPFAM" id="SSF52540">
    <property type="entry name" value="P-loop containing nucleoside triphosphate hydrolases"/>
    <property type="match status" value="2"/>
</dbReference>
<dbReference type="PROSITE" id="PS00211">
    <property type="entry name" value="ABC_TRANSPORTER_1"/>
    <property type="match status" value="1"/>
</dbReference>
<dbReference type="PROSITE" id="PS50893">
    <property type="entry name" value="ABC_TRANSPORTER_2"/>
    <property type="match status" value="2"/>
</dbReference>
<accession>Q81PZ8</accession>
<accession>Q6HY67</accession>
<accession>Q6KS82</accession>
<organism>
    <name type="scientific">Bacillus anthracis</name>
    <dbReference type="NCBI Taxonomy" id="1392"/>
    <lineage>
        <taxon>Bacteria</taxon>
        <taxon>Bacillati</taxon>
        <taxon>Bacillota</taxon>
        <taxon>Bacilli</taxon>
        <taxon>Bacillales</taxon>
        <taxon>Bacillaceae</taxon>
        <taxon>Bacillus</taxon>
        <taxon>Bacillus cereus group</taxon>
    </lineage>
</organism>
<proteinExistence type="inferred from homology"/>